<reference key="1">
    <citation type="submission" date="2008-02" db="EMBL/GenBank/DDBJ databases">
        <title>Complete sequence of Escherichia coli C str. ATCC 8739.</title>
        <authorList>
            <person name="Copeland A."/>
            <person name="Lucas S."/>
            <person name="Lapidus A."/>
            <person name="Glavina del Rio T."/>
            <person name="Dalin E."/>
            <person name="Tice H."/>
            <person name="Bruce D."/>
            <person name="Goodwin L."/>
            <person name="Pitluck S."/>
            <person name="Kiss H."/>
            <person name="Brettin T."/>
            <person name="Detter J.C."/>
            <person name="Han C."/>
            <person name="Kuske C.R."/>
            <person name="Schmutz J."/>
            <person name="Larimer F."/>
            <person name="Land M."/>
            <person name="Hauser L."/>
            <person name="Kyrpides N."/>
            <person name="Mikhailova N."/>
            <person name="Ingram L."/>
            <person name="Richardson P."/>
        </authorList>
    </citation>
    <scope>NUCLEOTIDE SEQUENCE [LARGE SCALE GENOMIC DNA]</scope>
    <source>
        <strain>ATCC 8739 / DSM 1576 / NBRC 3972 / NCIMB 8545 / WDCM 00012 / Crooks</strain>
    </source>
</reference>
<feature type="chain" id="PRO_1000087552" description="Probable manganese efflux pump MntP">
    <location>
        <begin position="1"/>
        <end position="188"/>
    </location>
</feature>
<feature type="transmembrane region" description="Helical" evidence="1">
    <location>
        <begin position="3"/>
        <end position="23"/>
    </location>
</feature>
<feature type="transmembrane region" description="Helical" evidence="1">
    <location>
        <begin position="66"/>
        <end position="86"/>
    </location>
</feature>
<feature type="transmembrane region" description="Helical" evidence="1">
    <location>
        <begin position="106"/>
        <end position="128"/>
    </location>
</feature>
<feature type="transmembrane region" description="Helical" evidence="1">
    <location>
        <begin position="143"/>
        <end position="163"/>
    </location>
</feature>
<feature type="transmembrane region" description="Helical" evidence="1">
    <location>
        <begin position="168"/>
        <end position="188"/>
    </location>
</feature>
<sequence length="188" mass="20117">MNITATVLLAFGMSMDAFAASIGKGATLHKPKFSEALRTGLIFGAVETLTPLIGWGMGMLASRFVLEWNHWIAFVLLIFLGGRMIIEGFRGADDEDEEPRRRHGFWLLVTTAIATSLDAMAVGVGLAFLQVNIIATALAIGCATLIMSTLGMMVGRFIGSIIGKKAEILGGLVLIGIGVQILWTHFHG</sequence>
<accession>B1J0R7</accession>
<name>MNTP_ECOLC</name>
<evidence type="ECO:0000255" key="1">
    <source>
        <dbReference type="HAMAP-Rule" id="MF_01521"/>
    </source>
</evidence>
<organism>
    <name type="scientific">Escherichia coli (strain ATCC 8739 / DSM 1576 / NBRC 3972 / NCIMB 8545 / WDCM 00012 / Crooks)</name>
    <dbReference type="NCBI Taxonomy" id="481805"/>
    <lineage>
        <taxon>Bacteria</taxon>
        <taxon>Pseudomonadati</taxon>
        <taxon>Pseudomonadota</taxon>
        <taxon>Gammaproteobacteria</taxon>
        <taxon>Enterobacterales</taxon>
        <taxon>Enterobacteriaceae</taxon>
        <taxon>Escherichia</taxon>
    </lineage>
</organism>
<proteinExistence type="inferred from homology"/>
<comment type="function">
    <text evidence="1">Probably functions as a manganese efflux pump.</text>
</comment>
<comment type="subcellular location">
    <subcellularLocation>
        <location evidence="1">Cell inner membrane</location>
        <topology evidence="1">Multi-pass membrane protein</topology>
    </subcellularLocation>
</comment>
<comment type="similarity">
    <text evidence="1">Belongs to the MntP (TC 9.B.29) family.</text>
</comment>
<dbReference type="EMBL" id="CP000946">
    <property type="protein sequence ID" value="ACA77461.1"/>
    <property type="molecule type" value="Genomic_DNA"/>
</dbReference>
<dbReference type="RefSeq" id="WP_001296134.1">
    <property type="nucleotide sequence ID" value="NZ_MTFT01000011.1"/>
</dbReference>
<dbReference type="GeneID" id="93776070"/>
<dbReference type="KEGG" id="ecl:EcolC_1811"/>
<dbReference type="HOGENOM" id="CLU_096410_0_0_6"/>
<dbReference type="GO" id="GO:0005886">
    <property type="term" value="C:plasma membrane"/>
    <property type="evidence" value="ECO:0007669"/>
    <property type="project" value="UniProtKB-SubCell"/>
</dbReference>
<dbReference type="GO" id="GO:0005384">
    <property type="term" value="F:manganese ion transmembrane transporter activity"/>
    <property type="evidence" value="ECO:0007669"/>
    <property type="project" value="UniProtKB-UniRule"/>
</dbReference>
<dbReference type="HAMAP" id="MF_01521">
    <property type="entry name" value="MntP_pump"/>
    <property type="match status" value="1"/>
</dbReference>
<dbReference type="InterPro" id="IPR003810">
    <property type="entry name" value="Mntp/YtaF"/>
</dbReference>
<dbReference type="InterPro" id="IPR022929">
    <property type="entry name" value="Put_MntP"/>
</dbReference>
<dbReference type="NCBIfam" id="NF008546">
    <property type="entry name" value="PRK11469.1"/>
    <property type="match status" value="1"/>
</dbReference>
<dbReference type="PANTHER" id="PTHR35529">
    <property type="entry name" value="MANGANESE EFFLUX PUMP MNTP-RELATED"/>
    <property type="match status" value="1"/>
</dbReference>
<dbReference type="PANTHER" id="PTHR35529:SF1">
    <property type="entry name" value="MANGANESE EFFLUX PUMP MNTP-RELATED"/>
    <property type="match status" value="1"/>
</dbReference>
<dbReference type="Pfam" id="PF02659">
    <property type="entry name" value="Mntp"/>
    <property type="match status" value="1"/>
</dbReference>
<keyword id="KW-0997">Cell inner membrane</keyword>
<keyword id="KW-1003">Cell membrane</keyword>
<keyword id="KW-0406">Ion transport</keyword>
<keyword id="KW-0464">Manganese</keyword>
<keyword id="KW-0472">Membrane</keyword>
<keyword id="KW-0812">Transmembrane</keyword>
<keyword id="KW-1133">Transmembrane helix</keyword>
<keyword id="KW-0813">Transport</keyword>
<protein>
    <recommendedName>
        <fullName evidence="1">Probable manganese efflux pump MntP</fullName>
    </recommendedName>
</protein>
<gene>
    <name evidence="1" type="primary">mntP</name>
    <name type="synonym">yebN</name>
    <name type="ordered locus">EcolC_1811</name>
</gene>